<comment type="function">
    <text evidence="1">One of the components of the core complex of photosystem II (PSII). It binds chlorophyll and helps catalyze the primary light-induced photochemical processes of PSII. PSII is a light-driven water:plastoquinone oxidoreductase, using light energy to abstract electrons from H(2)O, generating O(2) and a proton gradient subsequently used for ATP formation.</text>
</comment>
<comment type="cofactor">
    <text evidence="1">Binds multiple chlorophylls. PSII binds additional chlorophylls, carotenoids and specific lipids.</text>
</comment>
<comment type="subunit">
    <text evidence="1">PSII is composed of 1 copy each of membrane proteins PsbA, PsbB, PsbC, PsbD, PsbE, PsbF, PsbH, PsbI, PsbJ, PsbK, PsbL, PsbM, PsbT, PsbX, PsbY, PsbZ, Psb30/Ycf12, at least 3 peripheral proteins of the oxygen-evolving complex and a large number of cofactors. It forms dimeric complexes.</text>
</comment>
<comment type="subcellular location">
    <subcellularLocation>
        <location evidence="1">Plastid</location>
        <location evidence="1">Chloroplast thylakoid membrane</location>
        <topology evidence="1">Multi-pass membrane protein</topology>
    </subcellularLocation>
</comment>
<comment type="similarity">
    <text evidence="1">Belongs to the PsbB/PsbC family. PsbB subfamily.</text>
</comment>
<name>PSBB_ARAHI</name>
<keyword id="KW-0148">Chlorophyll</keyword>
<keyword id="KW-0150">Chloroplast</keyword>
<keyword id="KW-0157">Chromophore</keyword>
<keyword id="KW-0472">Membrane</keyword>
<keyword id="KW-0602">Photosynthesis</keyword>
<keyword id="KW-0604">Photosystem II</keyword>
<keyword id="KW-0934">Plastid</keyword>
<keyword id="KW-0793">Thylakoid</keyword>
<keyword id="KW-0812">Transmembrane</keyword>
<keyword id="KW-1133">Transmembrane helix</keyword>
<geneLocation type="chloroplast"/>
<proteinExistence type="inferred from homology"/>
<dbReference type="EMBL" id="AP009369">
    <property type="protein sequence ID" value="BAF50049.1"/>
    <property type="molecule type" value="Genomic_DNA"/>
</dbReference>
<dbReference type="RefSeq" id="YP_001123225.1">
    <property type="nucleotide sequence ID" value="NC_009268.1"/>
</dbReference>
<dbReference type="SMR" id="A4QK44"/>
<dbReference type="GeneID" id="4962539"/>
<dbReference type="GO" id="GO:0009535">
    <property type="term" value="C:chloroplast thylakoid membrane"/>
    <property type="evidence" value="ECO:0007669"/>
    <property type="project" value="UniProtKB-SubCell"/>
</dbReference>
<dbReference type="GO" id="GO:0009523">
    <property type="term" value="C:photosystem II"/>
    <property type="evidence" value="ECO:0007669"/>
    <property type="project" value="UniProtKB-KW"/>
</dbReference>
<dbReference type="GO" id="GO:0016168">
    <property type="term" value="F:chlorophyll binding"/>
    <property type="evidence" value="ECO:0007669"/>
    <property type="project" value="UniProtKB-UniRule"/>
</dbReference>
<dbReference type="GO" id="GO:0045156">
    <property type="term" value="F:electron transporter, transferring electrons within the cyclic electron transport pathway of photosynthesis activity"/>
    <property type="evidence" value="ECO:0007669"/>
    <property type="project" value="InterPro"/>
</dbReference>
<dbReference type="GO" id="GO:0009772">
    <property type="term" value="P:photosynthetic electron transport in photosystem II"/>
    <property type="evidence" value="ECO:0007669"/>
    <property type="project" value="InterPro"/>
</dbReference>
<dbReference type="FunFam" id="3.10.680.10:FF:000001">
    <property type="entry name" value="Photosystem II CP47 reaction center protein"/>
    <property type="match status" value="1"/>
</dbReference>
<dbReference type="Gene3D" id="3.10.680.10">
    <property type="entry name" value="Photosystem II CP47 reaction center protein"/>
    <property type="match status" value="1"/>
</dbReference>
<dbReference type="HAMAP" id="MF_01495">
    <property type="entry name" value="PSII_PsbB_CP47"/>
    <property type="match status" value="1"/>
</dbReference>
<dbReference type="InterPro" id="IPR000932">
    <property type="entry name" value="PS_antenna-like"/>
</dbReference>
<dbReference type="InterPro" id="IPR036001">
    <property type="entry name" value="PS_II_antenna-like_sf"/>
</dbReference>
<dbReference type="InterPro" id="IPR017486">
    <property type="entry name" value="PSII_PsbB"/>
</dbReference>
<dbReference type="NCBIfam" id="TIGR03039">
    <property type="entry name" value="PS_II_CP47"/>
    <property type="match status" value="1"/>
</dbReference>
<dbReference type="PANTHER" id="PTHR33180">
    <property type="entry name" value="PHOTOSYSTEM II CP43 REACTION CENTER PROTEIN"/>
    <property type="match status" value="1"/>
</dbReference>
<dbReference type="PANTHER" id="PTHR33180:SF38">
    <property type="entry name" value="PHOTOSYSTEM II CP47 REACTION CENTER PROTEIN"/>
    <property type="match status" value="1"/>
</dbReference>
<dbReference type="Pfam" id="PF00421">
    <property type="entry name" value="PSII"/>
    <property type="match status" value="1"/>
</dbReference>
<dbReference type="SUPFAM" id="SSF161077">
    <property type="entry name" value="Photosystem II antenna protein-like"/>
    <property type="match status" value="1"/>
</dbReference>
<reference key="1">
    <citation type="submission" date="2007-03" db="EMBL/GenBank/DDBJ databases">
        <title>Sequencing analysis of Arabis hirsuta chloroplast DNA.</title>
        <authorList>
            <person name="Hosouchi T."/>
            <person name="Tsuruoka H."/>
            <person name="Kotani H."/>
        </authorList>
    </citation>
    <scope>NUCLEOTIDE SEQUENCE [LARGE SCALE GENOMIC DNA]</scope>
</reference>
<sequence>MGLPWYRVHTVVLNDPGRLLSVHIMHTALVAGWAGSMALYELAVFDPSDPVLDPMWRQGMFVIPFMTRLGITNSWGGWNITGGTITNPGLWSYEGVAGAHIVFSGLCFLAAIWHWVYWDLEIFCDERTGKPSLDLPKIFGIHLFLSGVACFGFGAFHVTGLYGPGIWVSDPYGLTGKVQPVNPAWGVEGFDPFVPGGIASHHIAAGTLGILAGLFHLSVRPPQRLYKGLRMGNIETVLSSSIAAVFFAAFVVAGTMWYGSATTPIELFGPTRYQWDQGYFQQEIYRRVSAGLAENQSVSEAWSKIPEKLAFYDYIGNNPAKGGLFRAGSMDNGDGIAVGWLGHPVFRNKEGRELFVRRMPTFFETFPVVLVDGDGIVRADVPFRRAESKYSVEQVGVTVEFYGGELNGVSYSDPATVKKYARRAQLGEIFELDRATLKSDGVFRSSPRGWFTFGHASFALLFFFGHIWHGARTLFRDVFAGIDPDLDAQVEFGAFQKLGDPTTKRQAV</sequence>
<evidence type="ECO:0000255" key="1">
    <source>
        <dbReference type="HAMAP-Rule" id="MF_01495"/>
    </source>
</evidence>
<feature type="chain" id="PRO_0000359796" description="Photosystem II CP47 reaction center protein">
    <location>
        <begin position="1"/>
        <end position="508"/>
    </location>
</feature>
<feature type="transmembrane region" description="Helical" evidence="1">
    <location>
        <begin position="21"/>
        <end position="36"/>
    </location>
</feature>
<feature type="transmembrane region" description="Helical" evidence="1">
    <location>
        <begin position="101"/>
        <end position="115"/>
    </location>
</feature>
<feature type="transmembrane region" description="Helical" evidence="1">
    <location>
        <begin position="140"/>
        <end position="156"/>
    </location>
</feature>
<feature type="transmembrane region" description="Helical" evidence="1">
    <location>
        <begin position="203"/>
        <end position="218"/>
    </location>
</feature>
<feature type="transmembrane region" description="Helical" evidence="1">
    <location>
        <begin position="237"/>
        <end position="252"/>
    </location>
</feature>
<feature type="transmembrane region" description="Helical" evidence="1">
    <location>
        <begin position="457"/>
        <end position="472"/>
    </location>
</feature>
<protein>
    <recommendedName>
        <fullName evidence="1">Photosystem II CP47 reaction center protein</fullName>
    </recommendedName>
    <alternativeName>
        <fullName evidence="1">PSII 47 kDa protein</fullName>
    </alternativeName>
    <alternativeName>
        <fullName evidence="1">Protein CP-47</fullName>
    </alternativeName>
</protein>
<accession>A4QK44</accession>
<gene>
    <name evidence="1" type="primary">psbB</name>
</gene>
<organism>
    <name type="scientific">Arabis hirsuta</name>
    <name type="common">Hairy rock-cress</name>
    <name type="synonym">Turritis hirsuta</name>
    <dbReference type="NCBI Taxonomy" id="78191"/>
    <lineage>
        <taxon>Eukaryota</taxon>
        <taxon>Viridiplantae</taxon>
        <taxon>Streptophyta</taxon>
        <taxon>Embryophyta</taxon>
        <taxon>Tracheophyta</taxon>
        <taxon>Spermatophyta</taxon>
        <taxon>Magnoliopsida</taxon>
        <taxon>eudicotyledons</taxon>
        <taxon>Gunneridae</taxon>
        <taxon>Pentapetalae</taxon>
        <taxon>rosids</taxon>
        <taxon>malvids</taxon>
        <taxon>Brassicales</taxon>
        <taxon>Brassicaceae</taxon>
        <taxon>Arabideae</taxon>
        <taxon>Arabis</taxon>
    </lineage>
</organism>